<organism>
    <name type="scientific">Escherichia coli O157:H7</name>
    <dbReference type="NCBI Taxonomy" id="83334"/>
    <lineage>
        <taxon>Bacteria</taxon>
        <taxon>Pseudomonadati</taxon>
        <taxon>Pseudomonadota</taxon>
        <taxon>Gammaproteobacteria</taxon>
        <taxon>Enterobacterales</taxon>
        <taxon>Enterobacteriaceae</taxon>
        <taxon>Escherichia</taxon>
    </lineage>
</organism>
<comment type="catalytic activity">
    <reaction>
        <text>2-(5-oxo-2,5-dihydrofuran-2-ylidene)acetate + H2O = 4-oxohex-2-enedioate + H(+)</text>
        <dbReference type="Rhea" id="RHEA:12372"/>
        <dbReference type="ChEBI" id="CHEBI:12040"/>
        <dbReference type="ChEBI" id="CHEBI:15377"/>
        <dbReference type="ChEBI" id="CHEBI:15378"/>
        <dbReference type="ChEBI" id="CHEBI:57263"/>
        <dbReference type="EC" id="3.1.1.45"/>
    </reaction>
</comment>
<comment type="similarity">
    <text evidence="2">Belongs to the dienelactone hydrolase family.</text>
</comment>
<comment type="sequence caution" evidence="2">
    <conflict type="erroneous initiation">
        <sequence resource="EMBL-CDS" id="AAG59026"/>
    </conflict>
</comment>
<comment type="sequence caution" evidence="2">
    <conflict type="erroneous initiation">
        <sequence resource="EMBL-CDS" id="BAB38183"/>
    </conflict>
</comment>
<sequence length="271" mass="29396">MATTQQSGFAPAASPLASTIVQTPDDAIVAGFTSIPSQGDNMPAYHARPKQSDGPLPVVIVVQEIFGVHEHIRDICRRLALEGYLAIAPELYFREGDPNDFADIPTLLSGLVAKVPDSQVLADLDHVASWASRNGGDVHRLMITGFCWGGRITWLYAAHNPQLKAAVAWYGKLTGDKSLNSPKQPVDIATDLNAPVLGLYGGLDNSIPQESVETMRQALRAANAKAEIIVYPDAGHAFNADYRPSYHAASAEDGWQRMLEWFKQYGGKKSL</sequence>
<protein>
    <recommendedName>
        <fullName>Putative carboxymethylenebutenolidase</fullName>
        <ecNumber>3.1.1.45</ecNumber>
    </recommendedName>
    <alternativeName>
        <fullName>Dienelactone hydrolase</fullName>
        <shortName>DLH</shortName>
    </alternativeName>
</protein>
<dbReference type="EC" id="3.1.1.45"/>
<dbReference type="EMBL" id="AE005174">
    <property type="protein sequence ID" value="AAG59026.1"/>
    <property type="status" value="ALT_INIT"/>
    <property type="molecule type" value="Genomic_DNA"/>
</dbReference>
<dbReference type="EMBL" id="BA000007">
    <property type="protein sequence ID" value="BAB38183.1"/>
    <property type="status" value="ALT_INIT"/>
    <property type="molecule type" value="Genomic_DNA"/>
</dbReference>
<dbReference type="PIR" id="F86070">
    <property type="entry name" value="F86070"/>
</dbReference>
<dbReference type="PIR" id="H91223">
    <property type="entry name" value="H91223"/>
</dbReference>
<dbReference type="RefSeq" id="NP_312787.2">
    <property type="nucleotide sequence ID" value="NC_002695.1"/>
</dbReference>
<dbReference type="RefSeq" id="WP_001301462.1">
    <property type="nucleotide sequence ID" value="NZ_VOAI01000017.1"/>
</dbReference>
<dbReference type="SMR" id="Q8X8L4"/>
<dbReference type="STRING" id="155864.Z5352"/>
<dbReference type="ESTHER" id="ecoli-dlhh">
    <property type="family name" value="Dienelactone_hydrolase"/>
</dbReference>
<dbReference type="GeneID" id="915144"/>
<dbReference type="KEGG" id="ece:Z5352"/>
<dbReference type="KEGG" id="ecs:ECs_4760"/>
<dbReference type="PATRIC" id="fig|386585.9.peg.4969"/>
<dbReference type="eggNOG" id="COG0412">
    <property type="taxonomic scope" value="Bacteria"/>
</dbReference>
<dbReference type="HOGENOM" id="CLU_054590_7_0_6"/>
<dbReference type="OMA" id="QCGAKHI"/>
<dbReference type="Proteomes" id="UP000000558">
    <property type="component" value="Chromosome"/>
</dbReference>
<dbReference type="Proteomes" id="UP000002519">
    <property type="component" value="Chromosome"/>
</dbReference>
<dbReference type="GO" id="GO:0008806">
    <property type="term" value="F:carboxymethylenebutenolidase activity"/>
    <property type="evidence" value="ECO:0007669"/>
    <property type="project" value="UniProtKB-EC"/>
</dbReference>
<dbReference type="Gene3D" id="3.40.50.1820">
    <property type="entry name" value="alpha/beta hydrolase"/>
    <property type="match status" value="1"/>
</dbReference>
<dbReference type="InterPro" id="IPR029058">
    <property type="entry name" value="AB_hydrolase_fold"/>
</dbReference>
<dbReference type="InterPro" id="IPR002925">
    <property type="entry name" value="Dienelactn_hydro"/>
</dbReference>
<dbReference type="InterPro" id="IPR051049">
    <property type="entry name" value="Dienelactone_hydrolase-like"/>
</dbReference>
<dbReference type="PANTHER" id="PTHR46623:SF6">
    <property type="entry name" value="ALPHA_BETA-HYDROLASES SUPERFAMILY PROTEIN"/>
    <property type="match status" value="1"/>
</dbReference>
<dbReference type="PANTHER" id="PTHR46623">
    <property type="entry name" value="CARBOXYMETHYLENEBUTENOLIDASE-RELATED"/>
    <property type="match status" value="1"/>
</dbReference>
<dbReference type="Pfam" id="PF01738">
    <property type="entry name" value="DLH"/>
    <property type="match status" value="1"/>
</dbReference>
<dbReference type="SUPFAM" id="SSF53474">
    <property type="entry name" value="alpha/beta-Hydrolases"/>
    <property type="match status" value="1"/>
</dbReference>
<reference key="1">
    <citation type="journal article" date="2001" name="Nature">
        <title>Genome sequence of enterohaemorrhagic Escherichia coli O157:H7.</title>
        <authorList>
            <person name="Perna N.T."/>
            <person name="Plunkett G. III"/>
            <person name="Burland V."/>
            <person name="Mau B."/>
            <person name="Glasner J.D."/>
            <person name="Rose D.J."/>
            <person name="Mayhew G.F."/>
            <person name="Evans P.S."/>
            <person name="Gregor J."/>
            <person name="Kirkpatrick H.A."/>
            <person name="Posfai G."/>
            <person name="Hackett J."/>
            <person name="Klink S."/>
            <person name="Boutin A."/>
            <person name="Shao Y."/>
            <person name="Miller L."/>
            <person name="Grotbeck E.J."/>
            <person name="Davis N.W."/>
            <person name="Lim A."/>
            <person name="Dimalanta E.T."/>
            <person name="Potamousis K."/>
            <person name="Apodaca J."/>
            <person name="Anantharaman T.S."/>
            <person name="Lin J."/>
            <person name="Yen G."/>
            <person name="Schwartz D.C."/>
            <person name="Welch R.A."/>
            <person name="Blattner F.R."/>
        </authorList>
    </citation>
    <scope>NUCLEOTIDE SEQUENCE [LARGE SCALE GENOMIC DNA]</scope>
    <source>
        <strain>O157:H7 / EDL933 / ATCC 700927 / EHEC</strain>
    </source>
</reference>
<reference key="2">
    <citation type="journal article" date="2001" name="DNA Res.">
        <title>Complete genome sequence of enterohemorrhagic Escherichia coli O157:H7 and genomic comparison with a laboratory strain K-12.</title>
        <authorList>
            <person name="Hayashi T."/>
            <person name="Makino K."/>
            <person name="Ohnishi M."/>
            <person name="Kurokawa K."/>
            <person name="Ishii K."/>
            <person name="Yokoyama K."/>
            <person name="Han C.-G."/>
            <person name="Ohtsubo E."/>
            <person name="Nakayama K."/>
            <person name="Murata T."/>
            <person name="Tanaka M."/>
            <person name="Tobe T."/>
            <person name="Iida T."/>
            <person name="Takami H."/>
            <person name="Honda T."/>
            <person name="Sasakawa C."/>
            <person name="Ogasawara N."/>
            <person name="Yasunaga T."/>
            <person name="Kuhara S."/>
            <person name="Shiba T."/>
            <person name="Hattori M."/>
            <person name="Shinagawa H."/>
        </authorList>
    </citation>
    <scope>NUCLEOTIDE SEQUENCE [LARGE SCALE GENOMIC DNA]</scope>
    <source>
        <strain>O157:H7 / Sakai / RIMD 0509952 / EHEC</strain>
    </source>
</reference>
<proteinExistence type="inferred from homology"/>
<gene>
    <name type="primary">ysgA</name>
    <name type="ordered locus">Z5352</name>
    <name type="ordered locus">ECs4760</name>
</gene>
<name>DLHH_ECO57</name>
<feature type="chain" id="PRO_0000161579" description="Putative carboxymethylenebutenolidase">
    <location>
        <begin position="1"/>
        <end position="271"/>
    </location>
</feature>
<feature type="active site" evidence="1">
    <location>
        <position position="147"/>
    </location>
</feature>
<feature type="active site" evidence="1">
    <location>
        <position position="204"/>
    </location>
</feature>
<feature type="active site" evidence="1">
    <location>
        <position position="236"/>
    </location>
</feature>
<accession>Q8X8L4</accession>
<evidence type="ECO:0000250" key="1"/>
<evidence type="ECO:0000305" key="2"/>
<keyword id="KW-0378">Hydrolase</keyword>
<keyword id="KW-1185">Reference proteome</keyword>